<accession>Q54ZP8</accession>
<name>HBX6_DICDI</name>
<gene>
    <name type="primary">hbx6</name>
    <name type="ORF">DDB_G0277505</name>
</gene>
<feature type="chain" id="PRO_0000388790" description="Homeobox protein 6">
    <location>
        <begin position="1"/>
        <end position="516"/>
    </location>
</feature>
<feature type="DNA-binding region" description="Homeobox 1" evidence="2">
    <location>
        <begin position="362"/>
        <end position="421"/>
    </location>
</feature>
<feature type="DNA-binding region" description="Homeobox 2" evidence="2">
    <location>
        <begin position="424"/>
        <end position="483"/>
    </location>
</feature>
<feature type="region of interest" description="Disordered" evidence="3">
    <location>
        <begin position="22"/>
        <end position="140"/>
    </location>
</feature>
<feature type="region of interest" description="Disordered" evidence="3">
    <location>
        <begin position="200"/>
        <end position="256"/>
    </location>
</feature>
<feature type="region of interest" description="Disordered" evidence="3">
    <location>
        <begin position="268"/>
        <end position="348"/>
    </location>
</feature>
<feature type="region of interest" description="Disordered" evidence="3">
    <location>
        <begin position="483"/>
        <end position="516"/>
    </location>
</feature>
<feature type="compositionally biased region" description="Low complexity" evidence="3">
    <location>
        <begin position="22"/>
        <end position="31"/>
    </location>
</feature>
<feature type="compositionally biased region" description="Gly residues" evidence="3">
    <location>
        <begin position="32"/>
        <end position="41"/>
    </location>
</feature>
<feature type="compositionally biased region" description="Low complexity" evidence="3">
    <location>
        <begin position="42"/>
        <end position="59"/>
    </location>
</feature>
<feature type="compositionally biased region" description="Low complexity" evidence="3">
    <location>
        <begin position="66"/>
        <end position="78"/>
    </location>
</feature>
<feature type="compositionally biased region" description="Low complexity" evidence="3">
    <location>
        <begin position="101"/>
        <end position="132"/>
    </location>
</feature>
<feature type="compositionally biased region" description="Low complexity" evidence="3">
    <location>
        <begin position="284"/>
        <end position="346"/>
    </location>
</feature>
<feature type="compositionally biased region" description="Low complexity" evidence="3">
    <location>
        <begin position="495"/>
        <end position="504"/>
    </location>
</feature>
<feature type="compositionally biased region" description="Acidic residues" evidence="3">
    <location>
        <begin position="505"/>
        <end position="516"/>
    </location>
</feature>
<sequence>MDKCVITGHHFSVENMNHNNNNYDFDNKNNSIGGGGGGGGSSSSRSSSSRSSSNRSSSGSSGGSGSNSSSSINNIINSDNDFKTERKQTKSPPLTLPNIKTTTTTTTTTTTTTTTTTKNENISSSESENSSSRVGSPNCNKKVKKTKTITISPTGYNINSKDDINKFTTYGYTNEKSNARRDPKWINDIIERYNRLKSESLNNNYNGSSSNNNNINNINNNSNNTTSPCQSPSSNTATITSISSPTSSSSSLSSPSFSINNIVNQDVDENDGCDRMNYTLLSQNNNNNNNNNNNNNNNNNNNNNNNNNNNNNNNNNNNNNNNNNNNNNNNNNNNNNNNNNTNTNNNGDECIVKPISLIQNKKSGQRSLKTKEHKEILEALYRVTLYPTSEETKTISQILGMTFGQVKSSFRHRREKLSKSGLFSYAKNLKNCGKSTAPLDNFFENCKYLTTKETEEFAAAYDVSFEQIKNYFKGKRAKLNKLSSKAIQDKDNQDNDNNNSNNNENNDDSYSDEGLF</sequence>
<protein>
    <recommendedName>
        <fullName>Homeobox protein 6</fullName>
        <shortName>DdHbx-6</shortName>
    </recommendedName>
</protein>
<evidence type="ECO:0000250" key="1"/>
<evidence type="ECO:0000255" key="2">
    <source>
        <dbReference type="PROSITE-ProRule" id="PRU00108"/>
    </source>
</evidence>
<evidence type="ECO:0000256" key="3">
    <source>
        <dbReference type="SAM" id="MobiDB-lite"/>
    </source>
</evidence>
<dbReference type="EMBL" id="AAFI02000020">
    <property type="protein sequence ID" value="EAL68715.1"/>
    <property type="molecule type" value="Genomic_DNA"/>
</dbReference>
<dbReference type="RefSeq" id="XP_642594.1">
    <property type="nucleotide sequence ID" value="XM_637502.1"/>
</dbReference>
<dbReference type="SMR" id="Q54ZP8"/>
<dbReference type="PaxDb" id="44689-DDB0220482"/>
<dbReference type="EnsemblProtists" id="EAL68715">
    <property type="protein sequence ID" value="EAL68715"/>
    <property type="gene ID" value="DDB_G0277505"/>
</dbReference>
<dbReference type="GeneID" id="8621011"/>
<dbReference type="KEGG" id="ddi:DDB_G0277505"/>
<dbReference type="dictyBase" id="DDB_G0277505">
    <property type="gene designation" value="hbx6"/>
</dbReference>
<dbReference type="VEuPathDB" id="AmoebaDB:DDB_G0277505"/>
<dbReference type="eggNOG" id="ENOG502SYC5">
    <property type="taxonomic scope" value="Eukaryota"/>
</dbReference>
<dbReference type="HOGENOM" id="CLU_601919_0_0_1"/>
<dbReference type="InParanoid" id="Q54ZP8"/>
<dbReference type="PRO" id="PR:Q54ZP8"/>
<dbReference type="Proteomes" id="UP000002195">
    <property type="component" value="Chromosome 2"/>
</dbReference>
<dbReference type="GO" id="GO:0005634">
    <property type="term" value="C:nucleus"/>
    <property type="evidence" value="ECO:0007669"/>
    <property type="project" value="UniProtKB-SubCell"/>
</dbReference>
<dbReference type="GO" id="GO:0000981">
    <property type="term" value="F:DNA-binding transcription factor activity, RNA polymerase II-specific"/>
    <property type="evidence" value="ECO:0000318"/>
    <property type="project" value="GO_Central"/>
</dbReference>
<dbReference type="GO" id="GO:0000978">
    <property type="term" value="F:RNA polymerase II cis-regulatory region sequence-specific DNA binding"/>
    <property type="evidence" value="ECO:0000318"/>
    <property type="project" value="GO_Central"/>
</dbReference>
<dbReference type="GO" id="GO:0006357">
    <property type="term" value="P:regulation of transcription by RNA polymerase II"/>
    <property type="evidence" value="ECO:0000318"/>
    <property type="project" value="GO_Central"/>
</dbReference>
<dbReference type="CDD" id="cd00086">
    <property type="entry name" value="homeodomain"/>
    <property type="match status" value="2"/>
</dbReference>
<dbReference type="Gene3D" id="1.10.10.60">
    <property type="entry name" value="Homeodomain-like"/>
    <property type="match status" value="2"/>
</dbReference>
<dbReference type="InterPro" id="IPR050460">
    <property type="entry name" value="Distal-less_Homeobox_TF"/>
</dbReference>
<dbReference type="InterPro" id="IPR001356">
    <property type="entry name" value="HD"/>
</dbReference>
<dbReference type="InterPro" id="IPR009057">
    <property type="entry name" value="Homeodomain-like_sf"/>
</dbReference>
<dbReference type="PANTHER" id="PTHR24327:SF41">
    <property type="entry name" value="BRAIN-SPECIFIC HOMEOBOX PROTEIN"/>
    <property type="match status" value="1"/>
</dbReference>
<dbReference type="PANTHER" id="PTHR24327">
    <property type="entry name" value="HOMEOBOX PROTEIN"/>
    <property type="match status" value="1"/>
</dbReference>
<dbReference type="Pfam" id="PF00046">
    <property type="entry name" value="Homeodomain"/>
    <property type="match status" value="2"/>
</dbReference>
<dbReference type="SMART" id="SM00389">
    <property type="entry name" value="HOX"/>
    <property type="match status" value="2"/>
</dbReference>
<dbReference type="SUPFAM" id="SSF46689">
    <property type="entry name" value="Homeodomain-like"/>
    <property type="match status" value="2"/>
</dbReference>
<dbReference type="PROSITE" id="PS50071">
    <property type="entry name" value="HOMEOBOX_2"/>
    <property type="match status" value="2"/>
</dbReference>
<organism>
    <name type="scientific">Dictyostelium discoideum</name>
    <name type="common">Social amoeba</name>
    <dbReference type="NCBI Taxonomy" id="44689"/>
    <lineage>
        <taxon>Eukaryota</taxon>
        <taxon>Amoebozoa</taxon>
        <taxon>Evosea</taxon>
        <taxon>Eumycetozoa</taxon>
        <taxon>Dictyostelia</taxon>
        <taxon>Dictyosteliales</taxon>
        <taxon>Dictyosteliaceae</taxon>
        <taxon>Dictyostelium</taxon>
    </lineage>
</organism>
<proteinExistence type="inferred from homology"/>
<comment type="function">
    <text evidence="1">Putative transcription factor.</text>
</comment>
<comment type="subcellular location">
    <subcellularLocation>
        <location evidence="2">Nucleus</location>
    </subcellularLocation>
</comment>
<keyword id="KW-0175">Coiled coil</keyword>
<keyword id="KW-0217">Developmental protein</keyword>
<keyword id="KW-0238">DNA-binding</keyword>
<keyword id="KW-0371">Homeobox</keyword>
<keyword id="KW-0539">Nucleus</keyword>
<keyword id="KW-1185">Reference proteome</keyword>
<keyword id="KW-0677">Repeat</keyword>
<keyword id="KW-0804">Transcription</keyword>
<keyword id="KW-0805">Transcription regulation</keyword>
<reference key="1">
    <citation type="journal article" date="2002" name="Nature">
        <title>Sequence and analysis of chromosome 2 of Dictyostelium discoideum.</title>
        <authorList>
            <person name="Gloeckner G."/>
            <person name="Eichinger L."/>
            <person name="Szafranski K."/>
            <person name="Pachebat J.A."/>
            <person name="Bankier A.T."/>
            <person name="Dear P.H."/>
            <person name="Lehmann R."/>
            <person name="Baumgart C."/>
            <person name="Parra G."/>
            <person name="Abril J.F."/>
            <person name="Guigo R."/>
            <person name="Kumpf K."/>
            <person name="Tunggal B."/>
            <person name="Cox E.C."/>
            <person name="Quail M.A."/>
            <person name="Platzer M."/>
            <person name="Rosenthal A."/>
            <person name="Noegel A.A."/>
        </authorList>
    </citation>
    <scope>NUCLEOTIDE SEQUENCE [LARGE SCALE GENOMIC DNA]</scope>
    <source>
        <strain>AX4</strain>
    </source>
</reference>
<reference key="2">
    <citation type="journal article" date="2005" name="Nature">
        <title>The genome of the social amoeba Dictyostelium discoideum.</title>
        <authorList>
            <person name="Eichinger L."/>
            <person name="Pachebat J.A."/>
            <person name="Gloeckner G."/>
            <person name="Rajandream M.A."/>
            <person name="Sucgang R."/>
            <person name="Berriman M."/>
            <person name="Song J."/>
            <person name="Olsen R."/>
            <person name="Szafranski K."/>
            <person name="Xu Q."/>
            <person name="Tunggal B."/>
            <person name="Kummerfeld S."/>
            <person name="Madera M."/>
            <person name="Konfortov B.A."/>
            <person name="Rivero F."/>
            <person name="Bankier A.T."/>
            <person name="Lehmann R."/>
            <person name="Hamlin N."/>
            <person name="Davies R."/>
            <person name="Gaudet P."/>
            <person name="Fey P."/>
            <person name="Pilcher K."/>
            <person name="Chen G."/>
            <person name="Saunders D."/>
            <person name="Sodergren E.J."/>
            <person name="Davis P."/>
            <person name="Kerhornou A."/>
            <person name="Nie X."/>
            <person name="Hall N."/>
            <person name="Anjard C."/>
            <person name="Hemphill L."/>
            <person name="Bason N."/>
            <person name="Farbrother P."/>
            <person name="Desany B."/>
            <person name="Just E."/>
            <person name="Morio T."/>
            <person name="Rost R."/>
            <person name="Churcher C.M."/>
            <person name="Cooper J."/>
            <person name="Haydock S."/>
            <person name="van Driessche N."/>
            <person name="Cronin A."/>
            <person name="Goodhead I."/>
            <person name="Muzny D.M."/>
            <person name="Mourier T."/>
            <person name="Pain A."/>
            <person name="Lu M."/>
            <person name="Harper D."/>
            <person name="Lindsay R."/>
            <person name="Hauser H."/>
            <person name="James K.D."/>
            <person name="Quiles M."/>
            <person name="Madan Babu M."/>
            <person name="Saito T."/>
            <person name="Buchrieser C."/>
            <person name="Wardroper A."/>
            <person name="Felder M."/>
            <person name="Thangavelu M."/>
            <person name="Johnson D."/>
            <person name="Knights A."/>
            <person name="Loulseged H."/>
            <person name="Mungall K.L."/>
            <person name="Oliver K."/>
            <person name="Price C."/>
            <person name="Quail M.A."/>
            <person name="Urushihara H."/>
            <person name="Hernandez J."/>
            <person name="Rabbinowitsch E."/>
            <person name="Steffen D."/>
            <person name="Sanders M."/>
            <person name="Ma J."/>
            <person name="Kohara Y."/>
            <person name="Sharp S."/>
            <person name="Simmonds M.N."/>
            <person name="Spiegler S."/>
            <person name="Tivey A."/>
            <person name="Sugano S."/>
            <person name="White B."/>
            <person name="Walker D."/>
            <person name="Woodward J.R."/>
            <person name="Winckler T."/>
            <person name="Tanaka Y."/>
            <person name="Shaulsky G."/>
            <person name="Schleicher M."/>
            <person name="Weinstock G.M."/>
            <person name="Rosenthal A."/>
            <person name="Cox E.C."/>
            <person name="Chisholm R.L."/>
            <person name="Gibbs R.A."/>
            <person name="Loomis W.F."/>
            <person name="Platzer M."/>
            <person name="Kay R.R."/>
            <person name="Williams J.G."/>
            <person name="Dear P.H."/>
            <person name="Noegel A.A."/>
            <person name="Barrell B.G."/>
            <person name="Kuspa A."/>
        </authorList>
    </citation>
    <scope>NUCLEOTIDE SEQUENCE [LARGE SCALE GENOMIC DNA]</scope>
    <source>
        <strain>AX4</strain>
    </source>
</reference>